<name>LGT_CLOBH</name>
<keyword id="KW-1003">Cell membrane</keyword>
<keyword id="KW-0472">Membrane</keyword>
<keyword id="KW-1185">Reference proteome</keyword>
<keyword id="KW-0808">Transferase</keyword>
<keyword id="KW-0812">Transmembrane</keyword>
<keyword id="KW-1133">Transmembrane helix</keyword>
<dbReference type="EC" id="2.5.1.145" evidence="1"/>
<dbReference type="EMBL" id="CP000727">
    <property type="protein sequence ID" value="ABS36794.1"/>
    <property type="molecule type" value="Genomic_DNA"/>
</dbReference>
<dbReference type="EMBL" id="AM412317">
    <property type="protein sequence ID" value="CAL84770.1"/>
    <property type="molecule type" value="Genomic_DNA"/>
</dbReference>
<dbReference type="RefSeq" id="WP_012048192.1">
    <property type="nucleotide sequence ID" value="NC_009698.1"/>
</dbReference>
<dbReference type="RefSeq" id="YP_001255698.1">
    <property type="nucleotide sequence ID" value="NC_009495.1"/>
</dbReference>
<dbReference type="RefSeq" id="YP_001388938.1">
    <property type="nucleotide sequence ID" value="NC_009698.1"/>
</dbReference>
<dbReference type="SMR" id="A5I6T8"/>
<dbReference type="GeneID" id="5187464"/>
<dbReference type="KEGG" id="cbh:CLC_3119"/>
<dbReference type="KEGG" id="cbo:CBO3209"/>
<dbReference type="PATRIC" id="fig|413999.7.peg.3187"/>
<dbReference type="HOGENOM" id="CLU_013386_0_1_9"/>
<dbReference type="UniPathway" id="UPA00664"/>
<dbReference type="PRO" id="PR:A5I6T8"/>
<dbReference type="Proteomes" id="UP000001986">
    <property type="component" value="Chromosome"/>
</dbReference>
<dbReference type="GO" id="GO:0005886">
    <property type="term" value="C:plasma membrane"/>
    <property type="evidence" value="ECO:0000318"/>
    <property type="project" value="GO_Central"/>
</dbReference>
<dbReference type="GO" id="GO:0008961">
    <property type="term" value="F:phosphatidylglycerol-prolipoprotein diacylglyceryl transferase activity"/>
    <property type="evidence" value="ECO:0000318"/>
    <property type="project" value="GO_Central"/>
</dbReference>
<dbReference type="GO" id="GO:0042158">
    <property type="term" value="P:lipoprotein biosynthetic process"/>
    <property type="evidence" value="ECO:0000318"/>
    <property type="project" value="GO_Central"/>
</dbReference>
<dbReference type="HAMAP" id="MF_01147">
    <property type="entry name" value="Lgt"/>
    <property type="match status" value="1"/>
</dbReference>
<dbReference type="InterPro" id="IPR001640">
    <property type="entry name" value="Lgt"/>
</dbReference>
<dbReference type="NCBIfam" id="TIGR00544">
    <property type="entry name" value="lgt"/>
    <property type="match status" value="1"/>
</dbReference>
<dbReference type="PANTHER" id="PTHR30589:SF0">
    <property type="entry name" value="PHOSPHATIDYLGLYCEROL--PROLIPOPROTEIN DIACYLGLYCERYL TRANSFERASE"/>
    <property type="match status" value="1"/>
</dbReference>
<dbReference type="PANTHER" id="PTHR30589">
    <property type="entry name" value="PROLIPOPROTEIN DIACYLGLYCERYL TRANSFERASE"/>
    <property type="match status" value="1"/>
</dbReference>
<dbReference type="Pfam" id="PF01790">
    <property type="entry name" value="LGT"/>
    <property type="match status" value="1"/>
</dbReference>
<dbReference type="PROSITE" id="PS01311">
    <property type="entry name" value="LGT"/>
    <property type="match status" value="1"/>
</dbReference>
<accession>A5I6T8</accession>
<accession>A7G823</accession>
<reference key="1">
    <citation type="journal article" date="2007" name="Genome Res.">
        <title>Genome sequence of a proteolytic (Group I) Clostridium botulinum strain Hall A and comparative analysis of the clostridial genomes.</title>
        <authorList>
            <person name="Sebaihia M."/>
            <person name="Peck M.W."/>
            <person name="Minton N.P."/>
            <person name="Thomson N.R."/>
            <person name="Holden M.T.G."/>
            <person name="Mitchell W.J."/>
            <person name="Carter A.T."/>
            <person name="Bentley S.D."/>
            <person name="Mason D.R."/>
            <person name="Crossman L."/>
            <person name="Paul C.J."/>
            <person name="Ivens A."/>
            <person name="Wells-Bennik M.H.J."/>
            <person name="Davis I.J."/>
            <person name="Cerdeno-Tarraga A.M."/>
            <person name="Churcher C."/>
            <person name="Quail M.A."/>
            <person name="Chillingworth T."/>
            <person name="Feltwell T."/>
            <person name="Fraser A."/>
            <person name="Goodhead I."/>
            <person name="Hance Z."/>
            <person name="Jagels K."/>
            <person name="Larke N."/>
            <person name="Maddison M."/>
            <person name="Moule S."/>
            <person name="Mungall K."/>
            <person name="Norbertczak H."/>
            <person name="Rabbinowitsch E."/>
            <person name="Sanders M."/>
            <person name="Simmonds M."/>
            <person name="White B."/>
            <person name="Whithead S."/>
            <person name="Parkhill J."/>
        </authorList>
    </citation>
    <scope>NUCLEOTIDE SEQUENCE [LARGE SCALE GENOMIC DNA]</scope>
    <source>
        <strain>Hall / ATCC 3502 / NCTC 13319 / Type A</strain>
    </source>
</reference>
<reference key="2">
    <citation type="journal article" date="2007" name="PLoS ONE">
        <title>Analysis of the neurotoxin complex genes in Clostridium botulinum A1-A4 and B1 strains: BoNT/A3, /Ba4 and /B1 clusters are located within plasmids.</title>
        <authorList>
            <person name="Smith T.J."/>
            <person name="Hill K.K."/>
            <person name="Foley B.T."/>
            <person name="Detter J.C."/>
            <person name="Munk A.C."/>
            <person name="Bruce D.C."/>
            <person name="Doggett N.A."/>
            <person name="Smith L.A."/>
            <person name="Marks J.D."/>
            <person name="Xie G."/>
            <person name="Brettin T.S."/>
        </authorList>
    </citation>
    <scope>NUCLEOTIDE SEQUENCE [LARGE SCALE GENOMIC DNA]</scope>
    <source>
        <strain>Hall / ATCC 3502 / NCTC 13319 / Type A</strain>
    </source>
</reference>
<evidence type="ECO:0000255" key="1">
    <source>
        <dbReference type="HAMAP-Rule" id="MF_01147"/>
    </source>
</evidence>
<proteinExistence type="inferred from homology"/>
<protein>
    <recommendedName>
        <fullName evidence="1">Phosphatidylglycerol--prolipoprotein diacylglyceryl transferase</fullName>
        <ecNumber evidence="1">2.5.1.145</ecNumber>
    </recommendedName>
</protein>
<comment type="function">
    <text evidence="1">Catalyzes the transfer of the diacylglyceryl group from phosphatidylglycerol to the sulfhydryl group of the N-terminal cysteine of a prolipoprotein, the first step in the formation of mature lipoproteins.</text>
</comment>
<comment type="catalytic activity">
    <reaction evidence="1">
        <text>L-cysteinyl-[prolipoprotein] + a 1,2-diacyl-sn-glycero-3-phospho-(1'-sn-glycerol) = an S-1,2-diacyl-sn-glyceryl-L-cysteinyl-[prolipoprotein] + sn-glycerol 1-phosphate + H(+)</text>
        <dbReference type="Rhea" id="RHEA:56712"/>
        <dbReference type="Rhea" id="RHEA-COMP:14679"/>
        <dbReference type="Rhea" id="RHEA-COMP:14680"/>
        <dbReference type="ChEBI" id="CHEBI:15378"/>
        <dbReference type="ChEBI" id="CHEBI:29950"/>
        <dbReference type="ChEBI" id="CHEBI:57685"/>
        <dbReference type="ChEBI" id="CHEBI:64716"/>
        <dbReference type="ChEBI" id="CHEBI:140658"/>
        <dbReference type="EC" id="2.5.1.145"/>
    </reaction>
</comment>
<comment type="pathway">
    <text evidence="1">Protein modification; lipoprotein biosynthesis (diacylglyceryl transfer).</text>
</comment>
<comment type="subcellular location">
    <subcellularLocation>
        <location evidence="1">Cell membrane</location>
        <topology evidence="1">Multi-pass membrane protein</topology>
    </subcellularLocation>
</comment>
<comment type="similarity">
    <text evidence="1">Belongs to the Lgt family.</text>
</comment>
<sequence>MNPIAFHVGNLAIRWYGVIISMGTALGLLLAMYNCKIREASYDEFINMFLIAFPSAIIGARLYYVIFEFEDYRDNLINIFNTRQGGLAIHGGIIFGVLAVYIYLKYRKESFFEYVDVAAPSIILGQAIGRWGNFFNSEAHGGPVTKEFISKFPQFIQNGMFIEGTYYHPTFLYESIWNFIICIFLVYLLKKTKKKGIVFMAYIGLYSLGRFFIEGLRTDSLYLGSIRVAQLISVLGIILSIFFIYNIIKKEKRY</sequence>
<feature type="chain" id="PRO_1000053416" description="Phosphatidylglycerol--prolipoprotein diacylglyceryl transferase">
    <location>
        <begin position="1"/>
        <end position="254"/>
    </location>
</feature>
<feature type="transmembrane region" description="Helical" evidence="1">
    <location>
        <begin position="11"/>
        <end position="31"/>
    </location>
</feature>
<feature type="transmembrane region" description="Helical" evidence="1">
    <location>
        <begin position="49"/>
        <end position="69"/>
    </location>
</feature>
<feature type="transmembrane region" description="Helical" evidence="1">
    <location>
        <begin position="84"/>
        <end position="104"/>
    </location>
</feature>
<feature type="transmembrane region" description="Helical" evidence="1">
    <location>
        <begin position="109"/>
        <end position="129"/>
    </location>
</feature>
<feature type="transmembrane region" description="Helical" evidence="1">
    <location>
        <begin position="169"/>
        <end position="189"/>
    </location>
</feature>
<feature type="transmembrane region" description="Helical" evidence="1">
    <location>
        <begin position="196"/>
        <end position="216"/>
    </location>
</feature>
<feature type="transmembrane region" description="Helical" evidence="1">
    <location>
        <begin position="228"/>
        <end position="248"/>
    </location>
</feature>
<feature type="binding site" evidence="1">
    <location>
        <position position="130"/>
    </location>
    <ligand>
        <name>a 1,2-diacyl-sn-glycero-3-phospho-(1'-sn-glycerol)</name>
        <dbReference type="ChEBI" id="CHEBI:64716"/>
    </ligand>
</feature>
<organism>
    <name type="scientific">Clostridium botulinum (strain Hall / ATCC 3502 / NCTC 13319 / Type A)</name>
    <dbReference type="NCBI Taxonomy" id="441771"/>
    <lineage>
        <taxon>Bacteria</taxon>
        <taxon>Bacillati</taxon>
        <taxon>Bacillota</taxon>
        <taxon>Clostridia</taxon>
        <taxon>Eubacteriales</taxon>
        <taxon>Clostridiaceae</taxon>
        <taxon>Clostridium</taxon>
    </lineage>
</organism>
<gene>
    <name evidence="1" type="primary">lgt</name>
    <name type="ordered locus">CBO3209</name>
    <name type="ordered locus">CLC_3119</name>
</gene>